<feature type="chain" id="PRO_0000396943" description="E3 ubiquitin-protein ligase BIG BROTHER">
    <location>
        <begin position="1"/>
        <end position="248"/>
    </location>
</feature>
<feature type="zinc finger region" description="RING-type; atypical" evidence="1">
    <location>
        <begin position="197"/>
        <end position="238"/>
    </location>
</feature>
<feature type="splice variant" id="VSP_039629" description="In isoform 2." evidence="7">
    <original>CPV</original>
    <variation>FVT</variation>
    <location>
        <begin position="234"/>
        <end position="236"/>
    </location>
</feature>
<feature type="splice variant" id="VSP_039630" description="In isoform 2." evidence="7">
    <location>
        <begin position="237"/>
        <end position="248"/>
    </location>
</feature>
<feature type="mutagenesis site" description="Loss of ubiquitin ligase activity and enlarged floral organs; when associated with S-200." evidence="2">
    <original>C</original>
    <variation>S</variation>
    <location>
        <position position="197"/>
    </location>
</feature>
<feature type="mutagenesis site" description="Loss of ubiquitin ligase activity and enlarged floral organs; when associated with S-197." evidence="2">
    <original>C</original>
    <variation>S</variation>
    <location>
        <position position="200"/>
    </location>
</feature>
<feature type="mutagenesis site" description="Increased root meristem size due to a high number of dividing meristematic cells." evidence="6">
    <original>P</original>
    <variation>L</variation>
    <location>
        <position position="235"/>
    </location>
</feature>
<feature type="sequence conflict" description="In Ref. 4; BAH56825." evidence="8" ref="4">
    <original>K</original>
    <variation>Q</variation>
    <location>
        <position position="62"/>
    </location>
</feature>
<sequence length="248" mass="27983">MNGDNRPVEDAHYTETGFPYAATGSYMDFYGGAAQGPLNYDHAATMHPQDNLYWTMNTNAYKFGFSGSDNASFYGSYDMNDHLSRMSIGRTNWDYHPMVNVADDPENTVARSVQIGDTDEHSEAEECIANEHDPDSPQVSWQDDIDPDTMTYEELVELGEAVGTESRGLSQELIETLPTKKYKFGSIFSRKRAGERCVICQLKYKIGERQMNLPCKHVYHSECISKWLSINKVCPVCNSEVFGEPSIH</sequence>
<gene>
    <name type="primary">BB</name>
    <name type="synonym">EOD1</name>
    <name type="ordered locus">At3g63530</name>
    <name type="ORF">TEL3S.1</name>
</gene>
<comment type="function">
    <text evidence="2 3 4 5 6">E3 ubiquitin-protein ligase that limits organ size, and possibly seed size, in a dose-dependent manner. Negatively regulates the duration of cell proliferation in leaves and petals independently of the major phytohormones (e.g. auxin, cytokinin, gibberellin, brassinosteroids, ethylene, abscisic acid, jasmonic acid), probably by targeting growth stimulators for degradation (PubMed:16461280, PubMed:18483219). Limits the proliferation of root meristematic cells (PubMed:28922745). Polyubiquitinates DA1 (PubMed:28167503). Involved in the promotion of leaf senescence, in addition to its function in restricting plant growth (PubMed:28003326). Possesses E3 ubiquitin-protein ligase activity in vitro (PubMed:16461280, PubMed:18483219, PubMed:28167503).</text>
</comment>
<comment type="catalytic activity">
    <reaction evidence="2 3">
        <text>S-ubiquitinyl-[E2 ubiquitin-conjugating enzyme]-L-cysteine + [acceptor protein]-L-lysine = [E2 ubiquitin-conjugating enzyme]-L-cysteine + N(6)-ubiquitinyl-[acceptor protein]-L-lysine.</text>
        <dbReference type="EC" id="2.3.2.27"/>
    </reaction>
</comment>
<comment type="pathway">
    <text evidence="8">Protein modification; protein ubiquitination.</text>
</comment>
<comment type="subunit">
    <text evidence="2 5">Interacts with the E2 ubiquitin conjugating enzyme UBC10 via the RING domain (PubMed:16461280). Interacts with DA1 (PubMed:28167503).</text>
</comment>
<comment type="alternative products">
    <event type="alternative splicing"/>
    <isoform>
        <id>Q8L649-1</id>
        <name>1</name>
        <sequence type="displayed"/>
    </isoform>
    <isoform>
        <id>Q8L649-2</id>
        <name>2</name>
        <sequence type="described" ref="VSP_039629 VSP_039630"/>
    </isoform>
</comment>
<comment type="tissue specificity">
    <text evidence="2">Mostly expressed in inflorescence, and, to a lower extent, in seedlings, roots, stems, leaves and siliques.</text>
</comment>
<comment type="developmental stage">
    <text evidence="2">Confined to proliferating cells. Mainly present in proliferating tissues (e.g. root, shoot and floral meristems, and young organs) and vasculature. During petal growth, gradually restricted to the distal part of the petal. Expressed in developing embryos.</text>
</comment>
<comment type="induction">
    <text>Rapid turn-over by proteasome-mediated degradation (at protein level).</text>
</comment>
<comment type="PTM">
    <text evidence="2">Auto-ubiquitinated.</text>
</comment>
<comment type="disruption phenotype">
    <text evidence="2 3">Enlarged floral organs (e.g. petals and sepals) and thick stems mainly due to altered numbers of normally sized cells. Enhanced da1-1 phenotype leading to increased seed and organ size.</text>
</comment>
<comment type="miscellaneous">
    <text evidence="4">Plants overexpressing BB exhibit early senescence.</text>
</comment>
<organism>
    <name type="scientific">Arabidopsis thaliana</name>
    <name type="common">Mouse-ear cress</name>
    <dbReference type="NCBI Taxonomy" id="3702"/>
    <lineage>
        <taxon>Eukaryota</taxon>
        <taxon>Viridiplantae</taxon>
        <taxon>Streptophyta</taxon>
        <taxon>Embryophyta</taxon>
        <taxon>Tracheophyta</taxon>
        <taxon>Spermatophyta</taxon>
        <taxon>Magnoliopsida</taxon>
        <taxon>eudicotyledons</taxon>
        <taxon>Gunneridae</taxon>
        <taxon>Pentapetalae</taxon>
        <taxon>rosids</taxon>
        <taxon>malvids</taxon>
        <taxon>Brassicales</taxon>
        <taxon>Brassicaceae</taxon>
        <taxon>Camelineae</taxon>
        <taxon>Arabidopsis</taxon>
    </lineage>
</organism>
<dbReference type="EC" id="2.3.2.27" evidence="2 3"/>
<dbReference type="EMBL" id="AL732522">
    <property type="protein sequence ID" value="CAD32249.1"/>
    <property type="molecule type" value="Genomic_DNA"/>
</dbReference>
<dbReference type="EMBL" id="CP002686">
    <property type="protein sequence ID" value="AEE80499.1"/>
    <property type="molecule type" value="Genomic_DNA"/>
</dbReference>
<dbReference type="EMBL" id="CP002686">
    <property type="protein sequence ID" value="AEE80500.1"/>
    <property type="molecule type" value="Genomic_DNA"/>
</dbReference>
<dbReference type="EMBL" id="BT010197">
    <property type="protein sequence ID" value="AAQ22666.1"/>
    <property type="molecule type" value="mRNA"/>
</dbReference>
<dbReference type="EMBL" id="AK318710">
    <property type="protein sequence ID" value="BAH56825.1"/>
    <property type="molecule type" value="mRNA"/>
</dbReference>
<dbReference type="EMBL" id="AK227673">
    <property type="protein sequence ID" value="BAE99660.1"/>
    <property type="molecule type" value="mRNA"/>
</dbReference>
<dbReference type="RefSeq" id="NP_001030922.1">
    <molecule id="Q8L649-1"/>
    <property type="nucleotide sequence ID" value="NM_001035845.2"/>
</dbReference>
<dbReference type="RefSeq" id="NP_680148.1">
    <molecule id="Q8L649-1"/>
    <property type="nucleotide sequence ID" value="NM_148885.3"/>
</dbReference>
<dbReference type="SMR" id="Q8L649"/>
<dbReference type="FunCoup" id="Q8L649">
    <property type="interactions" value="409"/>
</dbReference>
<dbReference type="STRING" id="3702.Q8L649"/>
<dbReference type="PaxDb" id="3702-AT3G63530.1"/>
<dbReference type="EnsemblPlants" id="AT3G63530.1">
    <molecule id="Q8L649-1"/>
    <property type="protein sequence ID" value="AT3G63530.1"/>
    <property type="gene ID" value="AT3G63530"/>
</dbReference>
<dbReference type="EnsemblPlants" id="AT3G63530.2">
    <molecule id="Q8L649-1"/>
    <property type="protein sequence ID" value="AT3G63530.2"/>
    <property type="gene ID" value="AT3G63530"/>
</dbReference>
<dbReference type="GeneID" id="825528"/>
<dbReference type="Gramene" id="AT3G63530.1">
    <molecule id="Q8L649-1"/>
    <property type="protein sequence ID" value="AT3G63530.1"/>
    <property type="gene ID" value="AT3G63530"/>
</dbReference>
<dbReference type="Gramene" id="AT3G63530.2">
    <molecule id="Q8L649-1"/>
    <property type="protein sequence ID" value="AT3G63530.2"/>
    <property type="gene ID" value="AT3G63530"/>
</dbReference>
<dbReference type="KEGG" id="ath:AT3G63530"/>
<dbReference type="Araport" id="AT3G63530"/>
<dbReference type="TAIR" id="AT3G63530">
    <property type="gene designation" value="BB"/>
</dbReference>
<dbReference type="eggNOG" id="KOG0800">
    <property type="taxonomic scope" value="Eukaryota"/>
</dbReference>
<dbReference type="HOGENOM" id="CLU_063973_0_1_1"/>
<dbReference type="InParanoid" id="Q8L649"/>
<dbReference type="OMA" id="VCYVEVF"/>
<dbReference type="PhylomeDB" id="Q8L649"/>
<dbReference type="BRENDA" id="2.3.2.27">
    <property type="organism ID" value="399"/>
</dbReference>
<dbReference type="UniPathway" id="UPA00143"/>
<dbReference type="PRO" id="PR:Q8L649"/>
<dbReference type="Proteomes" id="UP000006548">
    <property type="component" value="Chromosome 3"/>
</dbReference>
<dbReference type="ExpressionAtlas" id="Q8L649">
    <property type="expression patterns" value="baseline and differential"/>
</dbReference>
<dbReference type="GO" id="GO:0031624">
    <property type="term" value="F:ubiquitin conjugating enzyme binding"/>
    <property type="evidence" value="ECO:0000353"/>
    <property type="project" value="UniProtKB"/>
</dbReference>
<dbReference type="GO" id="GO:0004842">
    <property type="term" value="F:ubiquitin-protein transferase activity"/>
    <property type="evidence" value="ECO:0000314"/>
    <property type="project" value="TAIR"/>
</dbReference>
<dbReference type="GO" id="GO:0008270">
    <property type="term" value="F:zinc ion binding"/>
    <property type="evidence" value="ECO:0007669"/>
    <property type="project" value="UniProtKB-KW"/>
</dbReference>
<dbReference type="GO" id="GO:0048437">
    <property type="term" value="P:floral organ development"/>
    <property type="evidence" value="ECO:0000315"/>
    <property type="project" value="TAIR"/>
</dbReference>
<dbReference type="GO" id="GO:0008285">
    <property type="term" value="P:negative regulation of cell population proliferation"/>
    <property type="evidence" value="ECO:0000315"/>
    <property type="project" value="TAIR"/>
</dbReference>
<dbReference type="GO" id="GO:0046621">
    <property type="term" value="P:negative regulation of organ growth"/>
    <property type="evidence" value="ECO:0000315"/>
    <property type="project" value="TAIR"/>
</dbReference>
<dbReference type="GO" id="GO:1900057">
    <property type="term" value="P:positive regulation of leaf senescence"/>
    <property type="evidence" value="ECO:0000315"/>
    <property type="project" value="TAIR"/>
</dbReference>
<dbReference type="GO" id="GO:0051865">
    <property type="term" value="P:protein autoubiquitination"/>
    <property type="evidence" value="ECO:0000314"/>
    <property type="project" value="TAIR"/>
</dbReference>
<dbReference type="GO" id="GO:0016567">
    <property type="term" value="P:protein ubiquitination"/>
    <property type="evidence" value="ECO:0000314"/>
    <property type="project" value="TAIR"/>
</dbReference>
<dbReference type="CDD" id="cd23115">
    <property type="entry name" value="RING-H2_BB-like"/>
    <property type="match status" value="1"/>
</dbReference>
<dbReference type="FunFam" id="3.30.40.10:FF:000226">
    <property type="entry name" value="E3 ubiquitin ligase BIG BROTHER"/>
    <property type="match status" value="1"/>
</dbReference>
<dbReference type="Gene3D" id="3.30.40.10">
    <property type="entry name" value="Zinc/RING finger domain, C3HC4 (zinc finger)"/>
    <property type="match status" value="1"/>
</dbReference>
<dbReference type="InterPro" id="IPR033276">
    <property type="entry name" value="BB"/>
</dbReference>
<dbReference type="InterPro" id="IPR048217">
    <property type="entry name" value="BB-like_RING-H2"/>
</dbReference>
<dbReference type="InterPro" id="IPR001841">
    <property type="entry name" value="Znf_RING"/>
</dbReference>
<dbReference type="InterPro" id="IPR013083">
    <property type="entry name" value="Znf_RING/FYVE/PHD"/>
</dbReference>
<dbReference type="PANTHER" id="PTHR46400:SF5">
    <property type="entry name" value="RING-TYPE DOMAIN-CONTAINING PROTEIN"/>
    <property type="match status" value="1"/>
</dbReference>
<dbReference type="PANTHER" id="PTHR46400">
    <property type="entry name" value="RING/U-BOX SUPERFAMILY PROTEIN"/>
    <property type="match status" value="1"/>
</dbReference>
<dbReference type="Pfam" id="PF13639">
    <property type="entry name" value="zf-RING_2"/>
    <property type="match status" value="1"/>
</dbReference>
<dbReference type="SMART" id="SM00184">
    <property type="entry name" value="RING"/>
    <property type="match status" value="1"/>
</dbReference>
<dbReference type="SUPFAM" id="SSF57850">
    <property type="entry name" value="RING/U-box"/>
    <property type="match status" value="1"/>
</dbReference>
<dbReference type="PROSITE" id="PS50089">
    <property type="entry name" value="ZF_RING_2"/>
    <property type="match status" value="1"/>
</dbReference>
<keyword id="KW-0025">Alternative splicing</keyword>
<keyword id="KW-0217">Developmental protein</keyword>
<keyword id="KW-0479">Metal-binding</keyword>
<keyword id="KW-1185">Reference proteome</keyword>
<keyword id="KW-0808">Transferase</keyword>
<keyword id="KW-0832">Ubl conjugation</keyword>
<keyword id="KW-0833">Ubl conjugation pathway</keyword>
<keyword id="KW-0862">Zinc</keyword>
<keyword id="KW-0863">Zinc-finger</keyword>
<accession>Q8L649</accession>
<accession>C0Z296</accession>
<name>BB_ARATH</name>
<protein>
    <recommendedName>
        <fullName>E3 ubiquitin-protein ligase BIG BROTHER</fullName>
        <ecNumber evidence="2 3">2.3.2.27</ecNumber>
    </recommendedName>
    <alternativeName>
        <fullName>Protein ENHANCER OF DA1-1</fullName>
    </alternativeName>
    <alternativeName>
        <fullName evidence="8">RING-type E3 ubiquitin transferase BIG BROTHER</fullName>
    </alternativeName>
</protein>
<evidence type="ECO:0000255" key="1">
    <source>
        <dbReference type="PROSITE-ProRule" id="PRU00175"/>
    </source>
</evidence>
<evidence type="ECO:0000269" key="2">
    <source>
    </source>
</evidence>
<evidence type="ECO:0000269" key="3">
    <source>
    </source>
</evidence>
<evidence type="ECO:0000269" key="4">
    <source>
    </source>
</evidence>
<evidence type="ECO:0000269" key="5">
    <source>
    </source>
</evidence>
<evidence type="ECO:0000269" key="6">
    <source>
    </source>
</evidence>
<evidence type="ECO:0000303" key="7">
    <source>
    </source>
</evidence>
<evidence type="ECO:0000305" key="8"/>
<reference key="1">
    <citation type="journal article" date="2000" name="Nature">
        <title>Sequence and analysis of chromosome 3 of the plant Arabidopsis thaliana.</title>
        <authorList>
            <person name="Salanoubat M."/>
            <person name="Lemcke K."/>
            <person name="Rieger M."/>
            <person name="Ansorge W."/>
            <person name="Unseld M."/>
            <person name="Fartmann B."/>
            <person name="Valle G."/>
            <person name="Bloecker H."/>
            <person name="Perez-Alonso M."/>
            <person name="Obermaier B."/>
            <person name="Delseny M."/>
            <person name="Boutry M."/>
            <person name="Grivell L.A."/>
            <person name="Mache R."/>
            <person name="Puigdomenech P."/>
            <person name="De Simone V."/>
            <person name="Choisne N."/>
            <person name="Artiguenave F."/>
            <person name="Robert C."/>
            <person name="Brottier P."/>
            <person name="Wincker P."/>
            <person name="Cattolico L."/>
            <person name="Weissenbach J."/>
            <person name="Saurin W."/>
            <person name="Quetier F."/>
            <person name="Schaefer M."/>
            <person name="Mueller-Auer S."/>
            <person name="Gabel C."/>
            <person name="Fuchs M."/>
            <person name="Benes V."/>
            <person name="Wurmbach E."/>
            <person name="Drzonek H."/>
            <person name="Erfle H."/>
            <person name="Jordan N."/>
            <person name="Bangert S."/>
            <person name="Wiedelmann R."/>
            <person name="Kranz H."/>
            <person name="Voss H."/>
            <person name="Holland R."/>
            <person name="Brandt P."/>
            <person name="Nyakatura G."/>
            <person name="Vezzi A."/>
            <person name="D'Angelo M."/>
            <person name="Pallavicini A."/>
            <person name="Toppo S."/>
            <person name="Simionati B."/>
            <person name="Conrad A."/>
            <person name="Hornischer K."/>
            <person name="Kauer G."/>
            <person name="Loehnert T.-H."/>
            <person name="Nordsiek G."/>
            <person name="Reichelt J."/>
            <person name="Scharfe M."/>
            <person name="Schoen O."/>
            <person name="Bargues M."/>
            <person name="Terol J."/>
            <person name="Climent J."/>
            <person name="Navarro P."/>
            <person name="Collado C."/>
            <person name="Perez-Perez A."/>
            <person name="Ottenwaelder B."/>
            <person name="Duchemin D."/>
            <person name="Cooke R."/>
            <person name="Laudie M."/>
            <person name="Berger-Llauro C."/>
            <person name="Purnelle B."/>
            <person name="Masuy D."/>
            <person name="de Haan M."/>
            <person name="Maarse A.C."/>
            <person name="Alcaraz J.-P."/>
            <person name="Cottet A."/>
            <person name="Casacuberta E."/>
            <person name="Monfort A."/>
            <person name="Argiriou A."/>
            <person name="Flores M."/>
            <person name="Liguori R."/>
            <person name="Vitale D."/>
            <person name="Mannhaupt G."/>
            <person name="Haase D."/>
            <person name="Schoof H."/>
            <person name="Rudd S."/>
            <person name="Zaccaria P."/>
            <person name="Mewes H.-W."/>
            <person name="Mayer K.F.X."/>
            <person name="Kaul S."/>
            <person name="Town C.D."/>
            <person name="Koo H.L."/>
            <person name="Tallon L.J."/>
            <person name="Jenkins J."/>
            <person name="Rooney T."/>
            <person name="Rizzo M."/>
            <person name="Walts A."/>
            <person name="Utterback T."/>
            <person name="Fujii C.Y."/>
            <person name="Shea T.P."/>
            <person name="Creasy T.H."/>
            <person name="Haas B."/>
            <person name="Maiti R."/>
            <person name="Wu D."/>
            <person name="Peterson J."/>
            <person name="Van Aken S."/>
            <person name="Pai G."/>
            <person name="Militscher J."/>
            <person name="Sellers P."/>
            <person name="Gill J.E."/>
            <person name="Feldblyum T.V."/>
            <person name="Preuss D."/>
            <person name="Lin X."/>
            <person name="Nierman W.C."/>
            <person name="Salzberg S.L."/>
            <person name="White O."/>
            <person name="Venter J.C."/>
            <person name="Fraser C.M."/>
            <person name="Kaneko T."/>
            <person name="Nakamura Y."/>
            <person name="Sato S."/>
            <person name="Kato T."/>
            <person name="Asamizu E."/>
            <person name="Sasamoto S."/>
            <person name="Kimura T."/>
            <person name="Idesawa K."/>
            <person name="Kawashima K."/>
            <person name="Kishida Y."/>
            <person name="Kiyokawa C."/>
            <person name="Kohara M."/>
            <person name="Matsumoto M."/>
            <person name="Matsuno A."/>
            <person name="Muraki A."/>
            <person name="Nakayama S."/>
            <person name="Nakazaki N."/>
            <person name="Shinpo S."/>
            <person name="Takeuchi C."/>
            <person name="Wada T."/>
            <person name="Watanabe A."/>
            <person name="Yamada M."/>
            <person name="Yasuda M."/>
            <person name="Tabata S."/>
        </authorList>
    </citation>
    <scope>NUCLEOTIDE SEQUENCE [LARGE SCALE GENOMIC DNA]</scope>
    <source>
        <strain>cv. Columbia</strain>
    </source>
</reference>
<reference key="2">
    <citation type="journal article" date="2017" name="Plant J.">
        <title>Araport11: a complete reannotation of the Arabidopsis thaliana reference genome.</title>
        <authorList>
            <person name="Cheng C.Y."/>
            <person name="Krishnakumar V."/>
            <person name="Chan A.P."/>
            <person name="Thibaud-Nissen F."/>
            <person name="Schobel S."/>
            <person name="Town C.D."/>
        </authorList>
    </citation>
    <scope>GENOME REANNOTATION</scope>
    <source>
        <strain>cv. Columbia</strain>
    </source>
</reference>
<reference key="3">
    <citation type="journal article" date="2003" name="Science">
        <title>Empirical analysis of transcriptional activity in the Arabidopsis genome.</title>
        <authorList>
            <person name="Yamada K."/>
            <person name="Lim J."/>
            <person name="Dale J.M."/>
            <person name="Chen H."/>
            <person name="Shinn P."/>
            <person name="Palm C.J."/>
            <person name="Southwick A.M."/>
            <person name="Wu H.C."/>
            <person name="Kim C.J."/>
            <person name="Nguyen M."/>
            <person name="Pham P.K."/>
            <person name="Cheuk R.F."/>
            <person name="Karlin-Newmann G."/>
            <person name="Liu S.X."/>
            <person name="Lam B."/>
            <person name="Sakano H."/>
            <person name="Wu T."/>
            <person name="Yu G."/>
            <person name="Miranda M."/>
            <person name="Quach H.L."/>
            <person name="Tripp M."/>
            <person name="Chang C.H."/>
            <person name="Lee J.M."/>
            <person name="Toriumi M.J."/>
            <person name="Chan M.M."/>
            <person name="Tang C.C."/>
            <person name="Onodera C.S."/>
            <person name="Deng J.M."/>
            <person name="Akiyama K."/>
            <person name="Ansari Y."/>
            <person name="Arakawa T."/>
            <person name="Banh J."/>
            <person name="Banno F."/>
            <person name="Bowser L."/>
            <person name="Brooks S.Y."/>
            <person name="Carninci P."/>
            <person name="Chao Q."/>
            <person name="Choy N."/>
            <person name="Enju A."/>
            <person name="Goldsmith A.D."/>
            <person name="Gurjal M."/>
            <person name="Hansen N.F."/>
            <person name="Hayashizaki Y."/>
            <person name="Johnson-Hopson C."/>
            <person name="Hsuan V.W."/>
            <person name="Iida K."/>
            <person name="Karnes M."/>
            <person name="Khan S."/>
            <person name="Koesema E."/>
            <person name="Ishida J."/>
            <person name="Jiang P.X."/>
            <person name="Jones T."/>
            <person name="Kawai J."/>
            <person name="Kamiya A."/>
            <person name="Meyers C."/>
            <person name="Nakajima M."/>
            <person name="Narusaka M."/>
            <person name="Seki M."/>
            <person name="Sakurai T."/>
            <person name="Satou M."/>
            <person name="Tamse R."/>
            <person name="Vaysberg M."/>
            <person name="Wallender E.K."/>
            <person name="Wong C."/>
            <person name="Yamamura Y."/>
            <person name="Yuan S."/>
            <person name="Shinozaki K."/>
            <person name="Davis R.W."/>
            <person name="Theologis A."/>
            <person name="Ecker J.R."/>
        </authorList>
    </citation>
    <scope>NUCLEOTIDE SEQUENCE [LARGE SCALE MRNA] (ISOFORM 1)</scope>
    <source>
        <strain>cv. Columbia</strain>
    </source>
</reference>
<reference key="4">
    <citation type="journal article" date="2009" name="DNA Res.">
        <title>Analysis of multiple occurrences of alternative splicing events in Arabidopsis thaliana using novel sequenced full-length cDNAs.</title>
        <authorList>
            <person name="Iida K."/>
            <person name="Fukami-Kobayashi K."/>
            <person name="Toyoda A."/>
            <person name="Sakaki Y."/>
            <person name="Kobayashi M."/>
            <person name="Seki M."/>
            <person name="Shinozaki K."/>
        </authorList>
    </citation>
    <scope>NUCLEOTIDE SEQUENCE [LARGE SCALE MRNA] (ISOFORM 2)</scope>
    <source>
        <strain>cv. Columbia</strain>
        <tissue>Rosette leaf</tissue>
    </source>
</reference>
<reference key="5">
    <citation type="submission" date="2009-07" db="EMBL/GenBank/DDBJ databases">
        <title>Large-scale analysis of RIKEN Arabidopsis full-length (RAFL) cDNAs.</title>
        <authorList>
            <person name="Totoki Y."/>
            <person name="Seki M."/>
            <person name="Ishida J."/>
            <person name="Nakajima M."/>
            <person name="Enju A."/>
            <person name="Kamiya A."/>
            <person name="Narusaka M."/>
            <person name="Shin-i T."/>
            <person name="Nakagawa M."/>
            <person name="Sakamoto N."/>
            <person name="Oishi K."/>
            <person name="Kohara Y."/>
            <person name="Kobayashi M."/>
            <person name="Toyoda A."/>
            <person name="Sakaki Y."/>
            <person name="Sakurai T."/>
            <person name="Iida K."/>
            <person name="Akiyama K."/>
            <person name="Satou M."/>
            <person name="Toyoda T."/>
            <person name="Konagaya A."/>
            <person name="Carninci P."/>
            <person name="Kawai J."/>
            <person name="Hayashizaki Y."/>
            <person name="Shinozaki K."/>
        </authorList>
    </citation>
    <scope>NUCLEOTIDE SEQUENCE [LARGE SCALE MRNA] (ISOFORM 1)</scope>
    <source>
        <strain>cv. Columbia</strain>
    </source>
</reference>
<reference key="6">
    <citation type="journal article" date="2006" name="Curr. Biol.">
        <title>The E3 ubiquitin ligase BIG BROTHER controls arabidopsis organ size in a dosage-dependent manner.</title>
        <authorList>
            <person name="Disch S."/>
            <person name="Anastasiou E."/>
            <person name="Sharma V.K."/>
            <person name="Laux T."/>
            <person name="Fletcher J.C."/>
            <person name="Lenhard M."/>
        </authorList>
    </citation>
    <scope>FUNCTION</scope>
    <scope>CATALYTIC ACTIVITY</scope>
    <scope>RAPID TURN-OVER</scope>
    <scope>DISRUPTION PHENOTYPE</scope>
    <scope>TISSUE SPECIFICITY</scope>
    <scope>DEVELOPMENTAL STAGE</scope>
    <scope>MUTAGENESIS OF CYS-197 AND CYS-200</scope>
    <scope>INTERACTION WITH UBC10</scope>
    <scope>UBIQUITINATION</scope>
</reference>
<reference key="7">
    <citation type="journal article" date="2008" name="Genes Dev.">
        <title>Control of final seed and organ size by the DA1 gene family in Arabidopsis thaliana.</title>
        <authorList>
            <person name="Li Y."/>
            <person name="Zheng L."/>
            <person name="Corke F."/>
            <person name="Smith C."/>
            <person name="Bevan M.W."/>
        </authorList>
    </citation>
    <scope>FUNCTION</scope>
    <scope>CATALYTIC ACTIVITY</scope>
    <scope>DISRUPTION PHENOTYPE</scope>
</reference>
<reference key="8">
    <citation type="journal article" date="2017" name="Genes Dev.">
        <title>Ubiquitylation activates a peptidase that promotes cleavage and destabilization of its activating E3 ligases and diverse growth regulatory proteins to limit cell proliferation in Arabidopsis.</title>
        <authorList>
            <person name="Dong H."/>
            <person name="Dumenil J."/>
            <person name="Lu F.H."/>
            <person name="Na L."/>
            <person name="Vanhaeren H."/>
            <person name="Naumann C."/>
            <person name="Klecker M."/>
            <person name="Prior R."/>
            <person name="Smith C."/>
            <person name="McKenzie N."/>
            <person name="Saalbach G."/>
            <person name="Chen L."/>
            <person name="Xia T."/>
            <person name="Gonzalez N."/>
            <person name="Seguela M."/>
            <person name="Inze D."/>
            <person name="Dissmeyer N."/>
            <person name="Li Y."/>
            <person name="Bevan M.W."/>
        </authorList>
    </citation>
    <scope>FUNCTION</scope>
    <scope>INTERACTION WITH DA1</scope>
</reference>
<reference key="9">
    <citation type="journal article" date="2017" name="Plant Physiol.">
        <title>Forever young: the role of ubiquitin receptor DA1 and E3 ligase BIG BROTHER in controlling leaf growth and development.</title>
        <authorList>
            <person name="Vanhaeren H."/>
            <person name="Nam Y.J."/>
            <person name="De Milde L."/>
            <person name="Chae E."/>
            <person name="Storme V."/>
            <person name="Weigel D."/>
            <person name="Gonzalez N."/>
            <person name="Inze D."/>
        </authorList>
    </citation>
    <scope>FUNCTION</scope>
</reference>
<reference key="10">
    <citation type="journal article" date="2017" name="Plant Cell Physiol.">
        <title>BIG BROTHER uncouples cell proliferation from elongation in the Arabidopsis primary root.</title>
        <authorList>
            <person name="Cattaneo P."/>
            <person name="Hardtke C.S."/>
        </authorList>
    </citation>
    <scope>FUNCTION</scope>
    <scope>MUTAGENESIS OF PRO-235</scope>
</reference>
<proteinExistence type="evidence at protein level"/>